<evidence type="ECO:0000255" key="1">
    <source>
        <dbReference type="HAMAP-Rule" id="MF_03140"/>
    </source>
</evidence>
<evidence type="ECO:0000256" key="2">
    <source>
        <dbReference type="SAM" id="MobiDB-lite"/>
    </source>
</evidence>
<sequence>MGILGLSKLLYDKSPNAIREQELKNFFGRRIAVDASMSIYQFIIAMKGFQDGQGLELTNEKGDVTSHLNGLFARTLRMIDEGIKPIYVFDGKPPKLKADELEMRRQKAAEAERAFEKAKDAGDDEMMEKMSKRTVRVSRDQIDESKKLLRLMGIPVIQAPSEAEAQCAELVKKGKAWAVGTEDMDALTFGSTVMLRHLNISDAKKRPIVEIHLDEVLQTTGLSMDQFVDLCILLGCDYVPKVPGIGPQKAWEGIQRYGSIESFLESLDTTKHPVPADFYYKEARAFFQNPEVTRAEEIDIQFSEPDEVGLIQFLVKEKLFNPDRVNKGIARLRAAFTRKTQGRLDSFFTITKVPQQTAAARAPLVGTKRPRDGKYVHVSGTLRKATSGHKKAVKK</sequence>
<keyword id="KW-0227">DNA damage</keyword>
<keyword id="KW-0234">DNA repair</keyword>
<keyword id="KW-0235">DNA replication</keyword>
<keyword id="KW-0255">Endonuclease</keyword>
<keyword id="KW-0269">Exonuclease</keyword>
<keyword id="KW-0378">Hydrolase</keyword>
<keyword id="KW-0460">Magnesium</keyword>
<keyword id="KW-0479">Metal-binding</keyword>
<keyword id="KW-0496">Mitochondrion</keyword>
<keyword id="KW-0540">Nuclease</keyword>
<keyword id="KW-0539">Nucleus</keyword>
<keyword id="KW-0597">Phosphoprotein</keyword>
<keyword id="KW-1185">Reference proteome</keyword>
<protein>
    <recommendedName>
        <fullName evidence="1">Flap endonuclease 1</fullName>
        <shortName evidence="1">FEN-1</shortName>
        <ecNumber evidence="1">3.1.-.-</ecNumber>
    </recommendedName>
    <alternativeName>
        <fullName evidence="1">Flap structure-specific endonuclease 1</fullName>
    </alternativeName>
</protein>
<comment type="function">
    <text evidence="1">Structure-specific nuclease with 5'-flap endonuclease and 5'-3' exonuclease activities involved in DNA replication and repair. During DNA replication, cleaves the 5'-overhanging flap structure that is generated by displacement synthesis when DNA polymerase encounters the 5'-end of a downstream Okazaki fragment. It enters the flap from the 5'-end and then tracks to cleave the flap base, leaving a nick for ligation. Also involved in the long patch base excision repair (LP-BER) pathway, by cleaving within the apurinic/apyrimidinic (AP) site-terminated flap. Acts as a genome stabilization factor that prevents flaps from equilibrating into structures that lead to duplications and deletions. Also possesses 5'-3' exonuclease activity on nicked or gapped double-stranded DNA, and exhibits RNase H activity. Also involved in replication and repair of rDNA and in repairing mitochondrial DNA.</text>
</comment>
<comment type="cofactor">
    <cofactor evidence="1">
        <name>Mg(2+)</name>
        <dbReference type="ChEBI" id="CHEBI:18420"/>
    </cofactor>
    <text evidence="1">Binds 2 magnesium ions per subunit. They probably participate in the reaction catalyzed by the enzyme. May bind an additional third magnesium ion after substrate binding.</text>
</comment>
<comment type="subunit">
    <text evidence="1">Interacts with PCNA. Three molecules of FEN1 bind to one PCNA trimer with each molecule binding to one PCNA monomer. PCNA stimulates the nuclease activity without altering cleavage specificity.</text>
</comment>
<comment type="subcellular location">
    <subcellularLocation>
        <location evidence="1">Nucleus</location>
        <location evidence="1">Nucleolus</location>
    </subcellularLocation>
    <subcellularLocation>
        <location evidence="1">Nucleus</location>
        <location evidence="1">Nucleoplasm</location>
    </subcellularLocation>
    <subcellularLocation>
        <location evidence="1">Mitochondrion</location>
    </subcellularLocation>
    <text evidence="1">Resides mostly in the nucleoli and relocalizes to the nucleoplasm upon DNA damage.</text>
</comment>
<comment type="PTM">
    <text evidence="1">Phosphorylated. Phosphorylation upon DNA damage induces relocalization to the nuclear plasma.</text>
</comment>
<comment type="similarity">
    <text evidence="1">Belongs to the XPG/RAD2 endonuclease family. FEN1 subfamily.</text>
</comment>
<organism>
    <name type="scientific">Leishmania major</name>
    <dbReference type="NCBI Taxonomy" id="5664"/>
    <lineage>
        <taxon>Eukaryota</taxon>
        <taxon>Discoba</taxon>
        <taxon>Euglenozoa</taxon>
        <taxon>Kinetoplastea</taxon>
        <taxon>Metakinetoplastina</taxon>
        <taxon>Trypanosomatida</taxon>
        <taxon>Trypanosomatidae</taxon>
        <taxon>Leishmaniinae</taxon>
        <taxon>Leishmania</taxon>
    </lineage>
</organism>
<gene>
    <name evidence="1" type="primary">FEN1</name>
    <name type="ORF">LmjF.27.0250</name>
</gene>
<proteinExistence type="inferred from homology"/>
<accession>Q4FYU7</accession>
<accession>E9AD02</accession>
<name>FEN1_LEIMA</name>
<reference key="1">
    <citation type="journal article" date="2005" name="Science">
        <title>The genome of the kinetoplastid parasite, Leishmania major.</title>
        <authorList>
            <person name="Ivens A.C."/>
            <person name="Peacock C.S."/>
            <person name="Worthey E.A."/>
            <person name="Murphy L."/>
            <person name="Aggarwal G."/>
            <person name="Berriman M."/>
            <person name="Sisk E."/>
            <person name="Rajandream M.A."/>
            <person name="Adlem E."/>
            <person name="Aert R."/>
            <person name="Anupama A."/>
            <person name="Apostolou Z."/>
            <person name="Attipoe P."/>
            <person name="Bason N."/>
            <person name="Bauser C."/>
            <person name="Beck A."/>
            <person name="Beverley S.M."/>
            <person name="Bianchettin G."/>
            <person name="Borzym K."/>
            <person name="Bothe G."/>
            <person name="Bruschi C.V."/>
            <person name="Collins M."/>
            <person name="Cadag E."/>
            <person name="Ciarloni L."/>
            <person name="Clayton C."/>
            <person name="Coulson R.M.R."/>
            <person name="Cronin A."/>
            <person name="Cruz A.K."/>
            <person name="Davies R.M."/>
            <person name="De Gaudenzi J."/>
            <person name="Dobson D.E."/>
            <person name="Duesterhoeft A."/>
            <person name="Fazelina G."/>
            <person name="Fosker N."/>
            <person name="Frasch A.C."/>
            <person name="Fraser A."/>
            <person name="Fuchs M."/>
            <person name="Gabel C."/>
            <person name="Goble A."/>
            <person name="Goffeau A."/>
            <person name="Harris D."/>
            <person name="Hertz-Fowler C."/>
            <person name="Hilbert H."/>
            <person name="Horn D."/>
            <person name="Huang Y."/>
            <person name="Klages S."/>
            <person name="Knights A."/>
            <person name="Kube M."/>
            <person name="Larke N."/>
            <person name="Litvin L."/>
            <person name="Lord A."/>
            <person name="Louie T."/>
            <person name="Marra M."/>
            <person name="Masuy D."/>
            <person name="Matthews K."/>
            <person name="Michaeli S."/>
            <person name="Mottram J.C."/>
            <person name="Mueller-Auer S."/>
            <person name="Munden H."/>
            <person name="Nelson S."/>
            <person name="Norbertczak H."/>
            <person name="Oliver K."/>
            <person name="O'neil S."/>
            <person name="Pentony M."/>
            <person name="Pohl T.M."/>
            <person name="Price C."/>
            <person name="Purnelle B."/>
            <person name="Quail M.A."/>
            <person name="Rabbinowitsch E."/>
            <person name="Reinhardt R."/>
            <person name="Rieger M."/>
            <person name="Rinta J."/>
            <person name="Robben J."/>
            <person name="Robertson L."/>
            <person name="Ruiz J.C."/>
            <person name="Rutter S."/>
            <person name="Saunders D."/>
            <person name="Schaefer M."/>
            <person name="Schein J."/>
            <person name="Schwartz D.C."/>
            <person name="Seeger K."/>
            <person name="Seyler A."/>
            <person name="Sharp S."/>
            <person name="Shin H."/>
            <person name="Sivam D."/>
            <person name="Squares R."/>
            <person name="Squares S."/>
            <person name="Tosato V."/>
            <person name="Vogt C."/>
            <person name="Volckaert G."/>
            <person name="Wambutt R."/>
            <person name="Warren T."/>
            <person name="Wedler H."/>
            <person name="Woodward J."/>
            <person name="Zhou S."/>
            <person name="Zimmermann W."/>
            <person name="Smith D.F."/>
            <person name="Blackwell J.M."/>
            <person name="Stuart K.D."/>
            <person name="Barrell B.G."/>
            <person name="Myler P.J."/>
        </authorList>
    </citation>
    <scope>NUCLEOTIDE SEQUENCE [LARGE SCALE GENOMIC DNA]</scope>
    <source>
        <strain>MHOM/IL/81/Friedlin</strain>
    </source>
</reference>
<feature type="chain" id="PRO_0000403548" description="Flap endonuclease 1">
    <location>
        <begin position="1"/>
        <end position="395"/>
    </location>
</feature>
<feature type="region of interest" description="N-domain">
    <location>
        <begin position="1"/>
        <end position="108"/>
    </location>
</feature>
<feature type="region of interest" description="Disordered" evidence="2">
    <location>
        <begin position="116"/>
        <end position="136"/>
    </location>
</feature>
<feature type="region of interest" description="I-domain">
    <location>
        <begin position="126"/>
        <end position="257"/>
    </location>
</feature>
<feature type="region of interest" description="Interaction with PCNA" evidence="1">
    <location>
        <begin position="340"/>
        <end position="348"/>
    </location>
</feature>
<feature type="binding site" evidence="1">
    <location>
        <position position="34"/>
    </location>
    <ligand>
        <name>Mg(2+)</name>
        <dbReference type="ChEBI" id="CHEBI:18420"/>
        <label>1</label>
    </ligand>
</feature>
<feature type="binding site" evidence="1">
    <location>
        <position position="74"/>
    </location>
    <ligand>
        <name>DNA</name>
        <dbReference type="ChEBI" id="CHEBI:16991"/>
    </ligand>
</feature>
<feature type="binding site" evidence="1">
    <location>
        <position position="90"/>
    </location>
    <ligand>
        <name>Mg(2+)</name>
        <dbReference type="ChEBI" id="CHEBI:18420"/>
        <label>1</label>
    </ligand>
</feature>
<feature type="binding site" evidence="1">
    <location>
        <position position="162"/>
    </location>
    <ligand>
        <name>DNA</name>
        <dbReference type="ChEBI" id="CHEBI:16991"/>
    </ligand>
</feature>
<feature type="binding site" evidence="1">
    <location>
        <position position="162"/>
    </location>
    <ligand>
        <name>Mg(2+)</name>
        <dbReference type="ChEBI" id="CHEBI:18420"/>
        <label>1</label>
    </ligand>
</feature>
<feature type="binding site" evidence="1">
    <location>
        <position position="164"/>
    </location>
    <ligand>
        <name>Mg(2+)</name>
        <dbReference type="ChEBI" id="CHEBI:18420"/>
        <label>1</label>
    </ligand>
</feature>
<feature type="binding site" evidence="1">
    <location>
        <position position="183"/>
    </location>
    <ligand>
        <name>Mg(2+)</name>
        <dbReference type="ChEBI" id="CHEBI:18420"/>
        <label>2</label>
    </ligand>
</feature>
<feature type="binding site" evidence="1">
    <location>
        <position position="185"/>
    </location>
    <ligand>
        <name>Mg(2+)</name>
        <dbReference type="ChEBI" id="CHEBI:18420"/>
        <label>2</label>
    </ligand>
</feature>
<feature type="binding site" evidence="1">
    <location>
        <position position="235"/>
    </location>
    <ligand>
        <name>DNA</name>
        <dbReference type="ChEBI" id="CHEBI:16991"/>
    </ligand>
</feature>
<feature type="binding site" evidence="1">
    <location>
        <position position="237"/>
    </location>
    <ligand>
        <name>DNA</name>
        <dbReference type="ChEBI" id="CHEBI:16991"/>
    </ligand>
</feature>
<feature type="binding site" evidence="1">
    <location>
        <position position="237"/>
    </location>
    <ligand>
        <name>Mg(2+)</name>
        <dbReference type="ChEBI" id="CHEBI:18420"/>
        <label>2</label>
    </ligand>
</feature>
<dbReference type="EC" id="3.1.-.-" evidence="1"/>
<dbReference type="EMBL" id="FR796423">
    <property type="protein sequence ID" value="CBZ12085.1"/>
    <property type="molecule type" value="Genomic_DNA"/>
</dbReference>
<dbReference type="RefSeq" id="XP_003721831.1">
    <property type="nucleotide sequence ID" value="XM_003721783.1"/>
</dbReference>
<dbReference type="SMR" id="Q4FYU7"/>
<dbReference type="FunCoup" id="Q4FYU7">
    <property type="interactions" value="552"/>
</dbReference>
<dbReference type="STRING" id="5664.Q4FYU7"/>
<dbReference type="EnsemblProtists" id="CBZ12085">
    <property type="protein sequence ID" value="CBZ12085"/>
    <property type="gene ID" value="LMJF_27_0250"/>
</dbReference>
<dbReference type="KEGG" id="lma:LMJF_27_0250"/>
<dbReference type="VEuPathDB" id="TriTrypDB:LmjF.27.0250"/>
<dbReference type="VEuPathDB" id="TriTrypDB:LMJFC_270007700"/>
<dbReference type="VEuPathDB" id="TriTrypDB:LMJLV39_270007600"/>
<dbReference type="VEuPathDB" id="TriTrypDB:LMJSD75_270007500"/>
<dbReference type="eggNOG" id="KOG2519">
    <property type="taxonomic scope" value="Eukaryota"/>
</dbReference>
<dbReference type="InParanoid" id="Q4FYU7"/>
<dbReference type="OMA" id="MGIPWVQ"/>
<dbReference type="Proteomes" id="UP000000542">
    <property type="component" value="Chromosome 27"/>
</dbReference>
<dbReference type="GO" id="GO:0005739">
    <property type="term" value="C:mitochondrion"/>
    <property type="evidence" value="ECO:0007669"/>
    <property type="project" value="UniProtKB-SubCell"/>
</dbReference>
<dbReference type="GO" id="GO:0005730">
    <property type="term" value="C:nucleolus"/>
    <property type="evidence" value="ECO:0007669"/>
    <property type="project" value="UniProtKB-SubCell"/>
</dbReference>
<dbReference type="GO" id="GO:0005654">
    <property type="term" value="C:nucleoplasm"/>
    <property type="evidence" value="ECO:0007669"/>
    <property type="project" value="UniProtKB-SubCell"/>
</dbReference>
<dbReference type="GO" id="GO:0008409">
    <property type="term" value="F:5'-3' exonuclease activity"/>
    <property type="evidence" value="ECO:0000318"/>
    <property type="project" value="GO_Central"/>
</dbReference>
<dbReference type="GO" id="GO:0017108">
    <property type="term" value="F:5'-flap endonuclease activity"/>
    <property type="evidence" value="ECO:0000318"/>
    <property type="project" value="GO_Central"/>
</dbReference>
<dbReference type="GO" id="GO:0003677">
    <property type="term" value="F:DNA binding"/>
    <property type="evidence" value="ECO:0007669"/>
    <property type="project" value="UniProtKB-UniRule"/>
</dbReference>
<dbReference type="GO" id="GO:0000287">
    <property type="term" value="F:magnesium ion binding"/>
    <property type="evidence" value="ECO:0007669"/>
    <property type="project" value="UniProtKB-UniRule"/>
</dbReference>
<dbReference type="GO" id="GO:0006284">
    <property type="term" value="P:base-excision repair"/>
    <property type="evidence" value="ECO:0007669"/>
    <property type="project" value="UniProtKB-UniRule"/>
</dbReference>
<dbReference type="GO" id="GO:0043137">
    <property type="term" value="P:DNA replication, removal of RNA primer"/>
    <property type="evidence" value="ECO:0007669"/>
    <property type="project" value="UniProtKB-UniRule"/>
</dbReference>
<dbReference type="CDD" id="cd09907">
    <property type="entry name" value="H3TH_FEN1-Euk"/>
    <property type="match status" value="1"/>
</dbReference>
<dbReference type="CDD" id="cd09867">
    <property type="entry name" value="PIN_FEN1"/>
    <property type="match status" value="1"/>
</dbReference>
<dbReference type="FunFam" id="1.10.150.20:FF:000009">
    <property type="entry name" value="Flap endonuclease 1"/>
    <property type="match status" value="1"/>
</dbReference>
<dbReference type="FunFam" id="3.40.50.1010:FF:000016">
    <property type="entry name" value="Flap endonuclease 1"/>
    <property type="match status" value="1"/>
</dbReference>
<dbReference type="Gene3D" id="1.10.150.20">
    <property type="entry name" value="5' to 3' exonuclease, C-terminal subdomain"/>
    <property type="match status" value="1"/>
</dbReference>
<dbReference type="Gene3D" id="3.40.50.1010">
    <property type="entry name" value="5'-nuclease"/>
    <property type="match status" value="1"/>
</dbReference>
<dbReference type="HAMAP" id="MF_00614">
    <property type="entry name" value="Fen"/>
    <property type="match status" value="1"/>
</dbReference>
<dbReference type="InterPro" id="IPR036279">
    <property type="entry name" value="5-3_exonuclease_C_sf"/>
</dbReference>
<dbReference type="InterPro" id="IPR023426">
    <property type="entry name" value="Flap_endonuc"/>
</dbReference>
<dbReference type="InterPro" id="IPR008918">
    <property type="entry name" value="HhH2"/>
</dbReference>
<dbReference type="InterPro" id="IPR029060">
    <property type="entry name" value="PIN-like_dom_sf"/>
</dbReference>
<dbReference type="InterPro" id="IPR006086">
    <property type="entry name" value="XPG-I_dom"/>
</dbReference>
<dbReference type="InterPro" id="IPR006084">
    <property type="entry name" value="XPG/Rad2"/>
</dbReference>
<dbReference type="InterPro" id="IPR019974">
    <property type="entry name" value="XPG_CS"/>
</dbReference>
<dbReference type="InterPro" id="IPR006085">
    <property type="entry name" value="XPG_DNA_repair_N"/>
</dbReference>
<dbReference type="PANTHER" id="PTHR11081:SF9">
    <property type="entry name" value="FLAP ENDONUCLEASE 1"/>
    <property type="match status" value="1"/>
</dbReference>
<dbReference type="PANTHER" id="PTHR11081">
    <property type="entry name" value="FLAP ENDONUCLEASE FAMILY MEMBER"/>
    <property type="match status" value="1"/>
</dbReference>
<dbReference type="Pfam" id="PF00867">
    <property type="entry name" value="XPG_I"/>
    <property type="match status" value="1"/>
</dbReference>
<dbReference type="Pfam" id="PF00752">
    <property type="entry name" value="XPG_N"/>
    <property type="match status" value="1"/>
</dbReference>
<dbReference type="PRINTS" id="PR00853">
    <property type="entry name" value="XPGRADSUPER"/>
</dbReference>
<dbReference type="SMART" id="SM00279">
    <property type="entry name" value="HhH2"/>
    <property type="match status" value="1"/>
</dbReference>
<dbReference type="SMART" id="SM00484">
    <property type="entry name" value="XPGI"/>
    <property type="match status" value="1"/>
</dbReference>
<dbReference type="SMART" id="SM00485">
    <property type="entry name" value="XPGN"/>
    <property type="match status" value="1"/>
</dbReference>
<dbReference type="SUPFAM" id="SSF47807">
    <property type="entry name" value="5' to 3' exonuclease, C-terminal subdomain"/>
    <property type="match status" value="1"/>
</dbReference>
<dbReference type="SUPFAM" id="SSF88723">
    <property type="entry name" value="PIN domain-like"/>
    <property type="match status" value="1"/>
</dbReference>
<dbReference type="PROSITE" id="PS00841">
    <property type="entry name" value="XPG_1"/>
    <property type="match status" value="1"/>
</dbReference>
<dbReference type="PROSITE" id="PS00842">
    <property type="entry name" value="XPG_2"/>
    <property type="match status" value="1"/>
</dbReference>